<dbReference type="EC" id="3.4.24.-" evidence="1"/>
<dbReference type="EMBL" id="CP000668">
    <property type="protein sequence ID" value="ABP40127.1"/>
    <property type="molecule type" value="Genomic_DNA"/>
</dbReference>
<dbReference type="RefSeq" id="WP_002210847.1">
    <property type="nucleotide sequence ID" value="NZ_CP009715.1"/>
</dbReference>
<dbReference type="SMR" id="A4TLG5"/>
<dbReference type="MEROPS" id="M48.002"/>
<dbReference type="GeneID" id="57976872"/>
<dbReference type="KEGG" id="ypp:YPDSF_1742"/>
<dbReference type="PATRIC" id="fig|386656.14.peg.3190"/>
<dbReference type="GO" id="GO:0005886">
    <property type="term" value="C:plasma membrane"/>
    <property type="evidence" value="ECO:0007669"/>
    <property type="project" value="UniProtKB-SubCell"/>
</dbReference>
<dbReference type="GO" id="GO:0004222">
    <property type="term" value="F:metalloendopeptidase activity"/>
    <property type="evidence" value="ECO:0007669"/>
    <property type="project" value="UniProtKB-UniRule"/>
</dbReference>
<dbReference type="GO" id="GO:0008270">
    <property type="term" value="F:zinc ion binding"/>
    <property type="evidence" value="ECO:0007669"/>
    <property type="project" value="UniProtKB-UniRule"/>
</dbReference>
<dbReference type="GO" id="GO:0006508">
    <property type="term" value="P:proteolysis"/>
    <property type="evidence" value="ECO:0007669"/>
    <property type="project" value="UniProtKB-KW"/>
</dbReference>
<dbReference type="CDD" id="cd07335">
    <property type="entry name" value="M48B_HtpX_like"/>
    <property type="match status" value="1"/>
</dbReference>
<dbReference type="FunFam" id="3.30.2010.10:FF:000001">
    <property type="entry name" value="Protease HtpX"/>
    <property type="match status" value="1"/>
</dbReference>
<dbReference type="Gene3D" id="3.30.2010.10">
    <property type="entry name" value="Metalloproteases ('zincins'), catalytic domain"/>
    <property type="match status" value="1"/>
</dbReference>
<dbReference type="HAMAP" id="MF_00188">
    <property type="entry name" value="Pept_M48_protease_HtpX"/>
    <property type="match status" value="1"/>
</dbReference>
<dbReference type="InterPro" id="IPR050083">
    <property type="entry name" value="HtpX_protease"/>
</dbReference>
<dbReference type="InterPro" id="IPR022919">
    <property type="entry name" value="Pept_M48_protease_HtpX"/>
</dbReference>
<dbReference type="InterPro" id="IPR001915">
    <property type="entry name" value="Peptidase_M48"/>
</dbReference>
<dbReference type="NCBIfam" id="NF003965">
    <property type="entry name" value="PRK05457.1"/>
    <property type="match status" value="1"/>
</dbReference>
<dbReference type="PANTHER" id="PTHR43221">
    <property type="entry name" value="PROTEASE HTPX"/>
    <property type="match status" value="1"/>
</dbReference>
<dbReference type="PANTHER" id="PTHR43221:SF1">
    <property type="entry name" value="PROTEASE HTPX"/>
    <property type="match status" value="1"/>
</dbReference>
<dbReference type="Pfam" id="PF01435">
    <property type="entry name" value="Peptidase_M48"/>
    <property type="match status" value="1"/>
</dbReference>
<gene>
    <name evidence="1" type="primary">htpX</name>
    <name type="ordered locus">YPDSF_1742</name>
</gene>
<sequence length="293" mass="32064">MMRIALFLLTNLAVMLVFGLVLSLTGIQSSSVQGLMIMAGLFGFGGAFVSLLMSKWMALRSVGGEVIERPRNETEYWLLETVRRQSQQVGIAMPQVAIYQAPDINAFATGARRDASLVAVSTGLLQNMSRDEAEAVIAHEISHVANGDMVTMTLIQGVVNTFVIFISRLIAQIAAGFLSGDRDGESNSPGNPMVYFAVSMVLELVFGILASIITMWFSRHREFHADAGSAKLVGREKMIAALQRLKTSYEPQEAGSMMAFCINGKSKTFSELFMSHPPLDKRIEALRSGQYLK</sequence>
<keyword id="KW-0997">Cell inner membrane</keyword>
<keyword id="KW-1003">Cell membrane</keyword>
<keyword id="KW-0378">Hydrolase</keyword>
<keyword id="KW-0472">Membrane</keyword>
<keyword id="KW-0479">Metal-binding</keyword>
<keyword id="KW-0482">Metalloprotease</keyword>
<keyword id="KW-0645">Protease</keyword>
<keyword id="KW-0346">Stress response</keyword>
<keyword id="KW-0812">Transmembrane</keyword>
<keyword id="KW-1133">Transmembrane helix</keyword>
<keyword id="KW-0862">Zinc</keyword>
<accession>A4TLG5</accession>
<name>HTPX_YERPP</name>
<protein>
    <recommendedName>
        <fullName evidence="1">Protease HtpX</fullName>
        <ecNumber evidence="1">3.4.24.-</ecNumber>
    </recommendedName>
    <alternativeName>
        <fullName evidence="1">Heat shock protein HtpX</fullName>
    </alternativeName>
</protein>
<proteinExistence type="inferred from homology"/>
<organism>
    <name type="scientific">Yersinia pestis (strain Pestoides F)</name>
    <dbReference type="NCBI Taxonomy" id="386656"/>
    <lineage>
        <taxon>Bacteria</taxon>
        <taxon>Pseudomonadati</taxon>
        <taxon>Pseudomonadota</taxon>
        <taxon>Gammaproteobacteria</taxon>
        <taxon>Enterobacterales</taxon>
        <taxon>Yersiniaceae</taxon>
        <taxon>Yersinia</taxon>
    </lineage>
</organism>
<comment type="cofactor">
    <cofactor evidence="1">
        <name>Zn(2+)</name>
        <dbReference type="ChEBI" id="CHEBI:29105"/>
    </cofactor>
    <text evidence="1">Binds 1 zinc ion per subunit.</text>
</comment>
<comment type="subcellular location">
    <subcellularLocation>
        <location evidence="1">Cell inner membrane</location>
        <topology evidence="1">Multi-pass membrane protein</topology>
    </subcellularLocation>
</comment>
<comment type="similarity">
    <text evidence="1">Belongs to the peptidase M48B family.</text>
</comment>
<feature type="chain" id="PRO_1000020975" description="Protease HtpX">
    <location>
        <begin position="1"/>
        <end position="293"/>
    </location>
</feature>
<feature type="transmembrane region" description="Helical" evidence="1">
    <location>
        <begin position="4"/>
        <end position="24"/>
    </location>
</feature>
<feature type="transmembrane region" description="Helical" evidence="1">
    <location>
        <begin position="34"/>
        <end position="54"/>
    </location>
</feature>
<feature type="transmembrane region" description="Helical" evidence="1">
    <location>
        <begin position="158"/>
        <end position="178"/>
    </location>
</feature>
<feature type="transmembrane region" description="Helical" evidence="1">
    <location>
        <begin position="193"/>
        <end position="213"/>
    </location>
</feature>
<feature type="active site" evidence="1">
    <location>
        <position position="140"/>
    </location>
</feature>
<feature type="binding site" evidence="1">
    <location>
        <position position="139"/>
    </location>
    <ligand>
        <name>Zn(2+)</name>
        <dbReference type="ChEBI" id="CHEBI:29105"/>
        <note>catalytic</note>
    </ligand>
</feature>
<feature type="binding site" evidence="1">
    <location>
        <position position="143"/>
    </location>
    <ligand>
        <name>Zn(2+)</name>
        <dbReference type="ChEBI" id="CHEBI:29105"/>
        <note>catalytic</note>
    </ligand>
</feature>
<feature type="binding site" evidence="1">
    <location>
        <position position="222"/>
    </location>
    <ligand>
        <name>Zn(2+)</name>
        <dbReference type="ChEBI" id="CHEBI:29105"/>
        <note>catalytic</note>
    </ligand>
</feature>
<evidence type="ECO:0000255" key="1">
    <source>
        <dbReference type="HAMAP-Rule" id="MF_00188"/>
    </source>
</evidence>
<reference key="1">
    <citation type="submission" date="2007-02" db="EMBL/GenBank/DDBJ databases">
        <title>Complete sequence of chromosome of Yersinia pestis Pestoides F.</title>
        <authorList>
            <consortium name="US DOE Joint Genome Institute"/>
            <person name="Copeland A."/>
            <person name="Lucas S."/>
            <person name="Lapidus A."/>
            <person name="Barry K."/>
            <person name="Detter J.C."/>
            <person name="Glavina del Rio T."/>
            <person name="Hammon N."/>
            <person name="Israni S."/>
            <person name="Dalin E."/>
            <person name="Tice H."/>
            <person name="Pitluck S."/>
            <person name="Di Bartolo G."/>
            <person name="Chain P."/>
            <person name="Malfatti S."/>
            <person name="Shin M."/>
            <person name="Vergez L."/>
            <person name="Schmutz J."/>
            <person name="Larimer F."/>
            <person name="Land M."/>
            <person name="Hauser L."/>
            <person name="Worsham P."/>
            <person name="Chu M."/>
            <person name="Bearden S."/>
            <person name="Garcia E."/>
            <person name="Richardson P."/>
        </authorList>
    </citation>
    <scope>NUCLEOTIDE SEQUENCE [LARGE SCALE GENOMIC DNA]</scope>
    <source>
        <strain>Pestoides F</strain>
    </source>
</reference>